<reference key="1">
    <citation type="journal article" date="1994" name="Yeast">
        <title>Sequence analysis of a 31 kb DNA fragment from the right arm of Saccharomyces cerevisiae chromosome II.</title>
        <authorList>
            <person name="van der Aart Q.J.M."/>
            <person name="Barthe C."/>
            <person name="Doignon F."/>
            <person name="Aigle M."/>
            <person name="Crouzet M."/>
            <person name="Steensma H.Y."/>
        </authorList>
    </citation>
    <scope>NUCLEOTIDE SEQUENCE [GENOMIC DNA]</scope>
    <source>
        <strain>ATCC 204508 / S288c</strain>
    </source>
</reference>
<reference key="2">
    <citation type="journal article" date="1994" name="EMBO J.">
        <title>Complete DNA sequence of yeast chromosome II.</title>
        <authorList>
            <person name="Feldmann H."/>
            <person name="Aigle M."/>
            <person name="Aljinovic G."/>
            <person name="Andre B."/>
            <person name="Baclet M.C."/>
            <person name="Barthe C."/>
            <person name="Baur A."/>
            <person name="Becam A.-M."/>
            <person name="Biteau N."/>
            <person name="Boles E."/>
            <person name="Brandt T."/>
            <person name="Brendel M."/>
            <person name="Brueckner M."/>
            <person name="Bussereau F."/>
            <person name="Christiansen C."/>
            <person name="Contreras R."/>
            <person name="Crouzet M."/>
            <person name="Cziepluch C."/>
            <person name="Demolis N."/>
            <person name="Delaveau T."/>
            <person name="Doignon F."/>
            <person name="Domdey H."/>
            <person name="Duesterhus S."/>
            <person name="Dubois E."/>
            <person name="Dujon B."/>
            <person name="El Bakkoury M."/>
            <person name="Entian K.-D."/>
            <person name="Feuermann M."/>
            <person name="Fiers W."/>
            <person name="Fobo G.M."/>
            <person name="Fritz C."/>
            <person name="Gassenhuber J."/>
            <person name="Glansdorff N."/>
            <person name="Goffeau A."/>
            <person name="Grivell L.A."/>
            <person name="de Haan M."/>
            <person name="Hein C."/>
            <person name="Herbert C.J."/>
            <person name="Hollenberg C.P."/>
            <person name="Holmstroem K."/>
            <person name="Jacq C."/>
            <person name="Jacquet M."/>
            <person name="Jauniaux J.-C."/>
            <person name="Jonniaux J.-L."/>
            <person name="Kallesoee T."/>
            <person name="Kiesau P."/>
            <person name="Kirchrath L."/>
            <person name="Koetter P."/>
            <person name="Korol S."/>
            <person name="Liebl S."/>
            <person name="Logghe M."/>
            <person name="Lohan A.J.E."/>
            <person name="Louis E.J."/>
            <person name="Li Z.Y."/>
            <person name="Maat M.J."/>
            <person name="Mallet L."/>
            <person name="Mannhaupt G."/>
            <person name="Messenguy F."/>
            <person name="Miosga T."/>
            <person name="Molemans F."/>
            <person name="Mueller S."/>
            <person name="Nasr F."/>
            <person name="Obermaier B."/>
            <person name="Perea J."/>
            <person name="Pierard A."/>
            <person name="Piravandi E."/>
            <person name="Pohl F.M."/>
            <person name="Pohl T.M."/>
            <person name="Potier S."/>
            <person name="Proft M."/>
            <person name="Purnelle B."/>
            <person name="Ramezani Rad M."/>
            <person name="Rieger M."/>
            <person name="Rose M."/>
            <person name="Schaaff-Gerstenschlaeger I."/>
            <person name="Scherens B."/>
            <person name="Schwarzlose C."/>
            <person name="Skala J."/>
            <person name="Slonimski P.P."/>
            <person name="Smits P.H.M."/>
            <person name="Souciet J.-L."/>
            <person name="Steensma H.Y."/>
            <person name="Stucka R."/>
            <person name="Urrestarazu L.A."/>
            <person name="van der Aart Q.J.M."/>
            <person name="Van Dyck L."/>
            <person name="Vassarotti A."/>
            <person name="Vetter I."/>
            <person name="Vierendeels F."/>
            <person name="Vissers S."/>
            <person name="Wagner G."/>
            <person name="de Wergifosse P."/>
            <person name="Wolfe K.H."/>
            <person name="Zagulski M."/>
            <person name="Zimmermann F.K."/>
            <person name="Mewes H.-W."/>
            <person name="Kleine K."/>
        </authorList>
    </citation>
    <scope>NUCLEOTIDE SEQUENCE [LARGE SCALE GENOMIC DNA]</scope>
    <source>
        <strain>ATCC 204508 / S288c</strain>
    </source>
</reference>
<reference key="3">
    <citation type="journal article" date="2014" name="G3 (Bethesda)">
        <title>The reference genome sequence of Saccharomyces cerevisiae: Then and now.</title>
        <authorList>
            <person name="Engel S.R."/>
            <person name="Dietrich F.S."/>
            <person name="Fisk D.G."/>
            <person name="Binkley G."/>
            <person name="Balakrishnan R."/>
            <person name="Costanzo M.C."/>
            <person name="Dwight S.S."/>
            <person name="Hitz B.C."/>
            <person name="Karra K."/>
            <person name="Nash R.S."/>
            <person name="Weng S."/>
            <person name="Wong E.D."/>
            <person name="Lloyd P."/>
            <person name="Skrzypek M.S."/>
            <person name="Miyasato S.R."/>
            <person name="Simison M."/>
            <person name="Cherry J.M."/>
        </authorList>
    </citation>
    <scope>GENOME REANNOTATION</scope>
    <source>
        <strain>ATCC 204508 / S288c</strain>
    </source>
</reference>
<reference key="4">
    <citation type="journal article" date="2003" name="Nature">
        <title>Global analysis of protein localization in budding yeast.</title>
        <authorList>
            <person name="Huh W.-K."/>
            <person name="Falvo J.V."/>
            <person name="Gerke L.C."/>
            <person name="Carroll A.S."/>
            <person name="Howson R.W."/>
            <person name="Weissman J.S."/>
            <person name="O'Shea E.K."/>
        </authorList>
    </citation>
    <scope>SUBCELLULAR LOCATION [LARGE SCALE ANALYSIS]</scope>
</reference>
<reference key="5">
    <citation type="journal article" date="2003" name="Nature">
        <title>Global analysis of protein expression in yeast.</title>
        <authorList>
            <person name="Ghaemmaghami S."/>
            <person name="Huh W.-K."/>
            <person name="Bower K."/>
            <person name="Howson R.W."/>
            <person name="Belle A."/>
            <person name="Dephoure N."/>
            <person name="O'Shea E.K."/>
            <person name="Weissman J.S."/>
        </authorList>
    </citation>
    <scope>LEVEL OF PROTEIN EXPRESSION [LARGE SCALE ANALYSIS]</scope>
</reference>
<reference key="6">
    <citation type="journal article" date="2005" name="Mol. Cell">
        <title>The TOR and EGO protein complexes orchestrate microautophagy in yeast.</title>
        <authorList>
            <person name="Dubouloz F."/>
            <person name="Deloche O."/>
            <person name="Wanke V."/>
            <person name="Cameroni E."/>
            <person name="De Virgilio C."/>
        </authorList>
    </citation>
    <scope>FUNCTION</scope>
    <scope>IDENTIFICATION IN THE EGO COMPLEX</scope>
    <scope>SUBCELLULAR LOCATION</scope>
</reference>
<reference key="7">
    <citation type="journal article" date="2006" name="Nat. Cell Biol.">
        <title>A conserved GTPase-containing complex is required for intracellular sorting of the general amino-acid permease in yeast.</title>
        <authorList>
            <person name="Gao M."/>
            <person name="Kaiser C.A."/>
        </authorList>
    </citation>
    <scope>FUNCTION</scope>
    <scope>IDENTIFICATION BY MASS SPECTROMETRY</scope>
    <scope>IDENTIFICATION IN THE GSE COMPLEX</scope>
</reference>
<reference key="8">
    <citation type="journal article" date="2018" name="PLoS Genet.">
        <title>Gtr/Ego-independent TORC1 activation is achieved through a glutamine-sensitive interaction with Pib2 on the vacuolar membrane.</title>
        <authorList>
            <person name="Ukai H."/>
            <person name="Araki Y."/>
            <person name="Kira S."/>
            <person name="Oikawa Y."/>
            <person name="May A.I."/>
            <person name="Noda T."/>
        </authorList>
    </citation>
    <scope>SUBCELLULAR LOCATION</scope>
</reference>
<reference key="9">
    <citation type="journal article" date="2020" name="J. Cell Sci.">
        <title>Amino acid homeostatic control by TORC1 in Saccharomyces cerevisiae under high hydrostatic pressure.</title>
        <authorList>
            <person name="Uemura S."/>
            <person name="Mochizuki T."/>
            <person name="Amemiya K."/>
            <person name="Kurosaka G."/>
            <person name="Yazawa M."/>
            <person name="Nakamoto K."/>
            <person name="Ishikawa Y."/>
            <person name="Izawa S."/>
            <person name="Abe F."/>
        </authorList>
    </citation>
    <scope>DISRUPTION PHENOTYPE</scope>
</reference>
<reference key="10">
    <citation type="journal article" date="2010" name="J. Mol. Biol.">
        <title>Structural conservation of components in the amino acid sensing branch of the TOR pathway in yeast and mammals.</title>
        <authorList>
            <person name="Kogan K."/>
            <person name="Spear E.D."/>
            <person name="Kaiser C.A."/>
            <person name="Fass D."/>
        </authorList>
    </citation>
    <scope>X-RAY CRYSTALLOGRAPHY (2.85 ANGSTROMS)</scope>
    <scope>INTERACTION WITH MEH1</scope>
</reference>
<name>SLM4_YEAST</name>
<keyword id="KW-0002">3D-structure</keyword>
<keyword id="KW-0072">Autophagy</keyword>
<keyword id="KW-0472">Membrane</keyword>
<keyword id="KW-0653">Protein transport</keyword>
<keyword id="KW-1185">Reference proteome</keyword>
<keyword id="KW-0812">Transmembrane</keyword>
<keyword id="KW-1133">Transmembrane helix</keyword>
<keyword id="KW-0813">Transport</keyword>
<keyword id="KW-0926">Vacuole</keyword>
<protein>
    <recommendedName>
        <fullName>Protein SLM4</fullName>
    </recommendedName>
    <alternativeName>
        <fullName>EGO complex subunit 3</fullName>
    </alternativeName>
    <alternativeName>
        <fullName>GSE complex subunit 1</fullName>
    </alternativeName>
</protein>
<gene>
    <name type="primary">SLM4</name>
    <name type="synonym">EGO3</name>
    <name type="synonym">GSE1</name>
    <name type="ordered locus">YBR077C</name>
    <name type="ORF">YBR0723</name>
</gene>
<proteinExistence type="evidence at protein level"/>
<accession>P38247</accession>
<accession>D6VQ76</accession>
<dbReference type="EMBL" id="X76294">
    <property type="protein sequence ID" value="CAA53934.1"/>
    <property type="molecule type" value="Genomic_DNA"/>
</dbReference>
<dbReference type="EMBL" id="Z35946">
    <property type="protein sequence ID" value="CAA85021.1"/>
    <property type="molecule type" value="Genomic_DNA"/>
</dbReference>
<dbReference type="EMBL" id="BK006936">
    <property type="protein sequence ID" value="DAA07196.1"/>
    <property type="molecule type" value="Genomic_DNA"/>
</dbReference>
<dbReference type="PIR" id="S45472">
    <property type="entry name" value="S45472"/>
</dbReference>
<dbReference type="RefSeq" id="NP_009633.3">
    <property type="nucleotide sequence ID" value="NM_001178425.3"/>
</dbReference>
<dbReference type="PDB" id="3LGO">
    <property type="method" value="X-ray"/>
    <property type="resolution" value="2.85 A"/>
    <property type="chains" value="A=1-162"/>
</dbReference>
<dbReference type="PDB" id="4FTX">
    <property type="method" value="X-ray"/>
    <property type="resolution" value="2.10 A"/>
    <property type="chains" value="A/B=1-162"/>
</dbReference>
<dbReference type="PDB" id="4FUW">
    <property type="method" value="X-ray"/>
    <property type="resolution" value="2.60 A"/>
    <property type="chains" value="A/B=1-162"/>
</dbReference>
<dbReference type="PDB" id="4XPM">
    <property type="method" value="X-ray"/>
    <property type="resolution" value="2.40 A"/>
    <property type="chains" value="C=1-162"/>
</dbReference>
<dbReference type="PDB" id="6JWP">
    <property type="method" value="X-ray"/>
    <property type="resolution" value="3.20 A"/>
    <property type="chains" value="E/J=1-162"/>
</dbReference>
<dbReference type="PDBsum" id="3LGO"/>
<dbReference type="PDBsum" id="4FTX"/>
<dbReference type="PDBsum" id="4FUW"/>
<dbReference type="PDBsum" id="4XPM"/>
<dbReference type="PDBsum" id="6JWP"/>
<dbReference type="SMR" id="P38247"/>
<dbReference type="BioGRID" id="32779">
    <property type="interactions" value="113"/>
</dbReference>
<dbReference type="ComplexPortal" id="CPX-3172">
    <property type="entry name" value="EGO complex"/>
</dbReference>
<dbReference type="ComplexPortal" id="CPX-3233">
    <property type="entry name" value="GSE complex"/>
</dbReference>
<dbReference type="DIP" id="DIP-1763N"/>
<dbReference type="FunCoup" id="P38247">
    <property type="interactions" value="61"/>
</dbReference>
<dbReference type="IntAct" id="P38247">
    <property type="interactions" value="9"/>
</dbReference>
<dbReference type="MINT" id="P38247"/>
<dbReference type="STRING" id="4932.YBR077C"/>
<dbReference type="PaxDb" id="4932-YBR077C"/>
<dbReference type="PeptideAtlas" id="P38247"/>
<dbReference type="EnsemblFungi" id="YBR077C_mRNA">
    <property type="protein sequence ID" value="YBR077C"/>
    <property type="gene ID" value="YBR077C"/>
</dbReference>
<dbReference type="GeneID" id="852369"/>
<dbReference type="KEGG" id="sce:YBR077C"/>
<dbReference type="AGR" id="SGD:S000000281"/>
<dbReference type="SGD" id="S000000281">
    <property type="gene designation" value="SLM4"/>
</dbReference>
<dbReference type="VEuPathDB" id="FungiDB:YBR077C"/>
<dbReference type="eggNOG" id="ENOG502S129">
    <property type="taxonomic scope" value="Eukaryota"/>
</dbReference>
<dbReference type="HOGENOM" id="CLU_104687_0_0_1"/>
<dbReference type="InParanoid" id="P38247"/>
<dbReference type="OMA" id="HTCVAQI"/>
<dbReference type="OrthoDB" id="4033908at2759"/>
<dbReference type="BioCyc" id="YEAST:G3O-29045-MONOMER"/>
<dbReference type="BioGRID-ORCS" id="852369">
    <property type="hits" value="1 hit in 10 CRISPR screens"/>
</dbReference>
<dbReference type="EvolutionaryTrace" id="P38247"/>
<dbReference type="PRO" id="PR:P38247"/>
<dbReference type="Proteomes" id="UP000002311">
    <property type="component" value="Chromosome II"/>
</dbReference>
<dbReference type="RNAct" id="P38247">
    <property type="molecule type" value="protein"/>
</dbReference>
<dbReference type="GO" id="GO:0005737">
    <property type="term" value="C:cytoplasm"/>
    <property type="evidence" value="ECO:0007005"/>
    <property type="project" value="SGD"/>
</dbReference>
<dbReference type="GO" id="GO:0000329">
    <property type="term" value="C:fungal-type vacuole membrane"/>
    <property type="evidence" value="ECO:0000314"/>
    <property type="project" value="SGD"/>
</dbReference>
<dbReference type="GO" id="GO:0005770">
    <property type="term" value="C:late endosome"/>
    <property type="evidence" value="ECO:0000314"/>
    <property type="project" value="ComplexPortal"/>
</dbReference>
<dbReference type="GO" id="GO:0031902">
    <property type="term" value="C:late endosome membrane"/>
    <property type="evidence" value="ECO:0000314"/>
    <property type="project" value="SGD"/>
</dbReference>
<dbReference type="GO" id="GO:0071986">
    <property type="term" value="C:Ragulator complex"/>
    <property type="evidence" value="ECO:0000314"/>
    <property type="project" value="SGD"/>
</dbReference>
<dbReference type="GO" id="GO:0042802">
    <property type="term" value="F:identical protein binding"/>
    <property type="evidence" value="ECO:0000353"/>
    <property type="project" value="IntAct"/>
</dbReference>
<dbReference type="GO" id="GO:0032456">
    <property type="term" value="P:endocytic recycling"/>
    <property type="evidence" value="ECO:0000314"/>
    <property type="project" value="ComplexPortal"/>
</dbReference>
<dbReference type="GO" id="GO:0016237">
    <property type="term" value="P:microautophagy"/>
    <property type="evidence" value="ECO:0000315"/>
    <property type="project" value="SGD"/>
</dbReference>
<dbReference type="GO" id="GO:0032008">
    <property type="term" value="P:positive regulation of TOR signaling"/>
    <property type="evidence" value="ECO:0000303"/>
    <property type="project" value="ComplexPortal"/>
</dbReference>
<dbReference type="GO" id="GO:0015031">
    <property type="term" value="P:protein transport"/>
    <property type="evidence" value="ECO:0007669"/>
    <property type="project" value="UniProtKB-KW"/>
</dbReference>
<dbReference type="GO" id="GO:0007165">
    <property type="term" value="P:signal transduction"/>
    <property type="evidence" value="ECO:0000315"/>
    <property type="project" value="SGD"/>
</dbReference>
<dbReference type="FunFam" id="3.30.450.30:FF:000026">
    <property type="entry name" value="Protein SLM4"/>
    <property type="match status" value="1"/>
</dbReference>
<dbReference type="Gene3D" id="3.30.450.30">
    <property type="entry name" value="Dynein light chain 2a, cytoplasmic"/>
    <property type="match status" value="1"/>
</dbReference>
<dbReference type="InterPro" id="IPR020233">
    <property type="entry name" value="Slm4"/>
</dbReference>
<dbReference type="Pfam" id="PF16818">
    <property type="entry name" value="SLM4"/>
    <property type="match status" value="1"/>
</dbReference>
<sequence length="162" mass="18354">MVMLHSKNVKGFLENTLKPYDLHSVDFKTSSLQSSMIITATNGGILSYATSNNDVPKNSINEINSVNNLKMMSLLIKDKWSEDENDTEEQHSNSCYPVEIDSFKTKIYTYEMEDLHTCVAQIPNSDLLLLFIAEGSFPYGLLVIKIERAMRELTDLFGYKLG</sequence>
<comment type="function">
    <text evidence="4 5">Component of the GSE complex, a GTPase complex required for intracellular sorting of GAP1 out of the endosome (PubMed:16732272). Component of the EGO complex, a complex involved in the regulation of microautophagy (PubMed:15989961).</text>
</comment>
<comment type="subunit">
    <text evidence="4 5">Component of the GSE complex composed of GTR1, GTR2, SLM4, MEH1 and LTV1 (PubMed:16732272). Component of the EGO complex, at least composed of GTR2, SLM4 and MEH1 (PubMed:15989961).</text>
</comment>
<comment type="interaction">
    <interactant intactId="EBI-21507">
        <id>P38247</id>
    </interactant>
    <interactant intactId="EBI-7954">
        <id>Q00582</id>
        <label>GTR1</label>
    </interactant>
    <organismsDiffer>false</organismsDiffer>
    <experiments>6</experiments>
</comment>
<comment type="interaction">
    <interactant intactId="EBI-21507">
        <id>P38247</id>
    </interactant>
    <interactant intactId="EBI-7962">
        <id>P53290</id>
        <label>GTR2</label>
    </interactant>
    <organismsDiffer>false</organismsDiffer>
    <experiments>3</experiments>
</comment>
<comment type="interaction">
    <interactant intactId="EBI-21507">
        <id>P38247</id>
    </interactant>
    <interactant intactId="EBI-27062">
        <id>Q02205</id>
        <label>MEH1</label>
    </interactant>
    <organismsDiffer>false</organismsDiffer>
    <experiments>5</experiments>
</comment>
<comment type="interaction">
    <interactant intactId="EBI-21507">
        <id>P38247</id>
    </interactant>
    <interactant intactId="EBI-21507">
        <id>P38247</id>
        <label>SLM4</label>
    </interactant>
    <organismsDiffer>false</organismsDiffer>
    <experiments>3</experiments>
</comment>
<comment type="subcellular location">
    <subcellularLocation>
        <location evidence="2 4 6">Vacuole membrane</location>
        <topology evidence="2 4">Single-pass membrane protein</topology>
    </subcellularLocation>
</comment>
<comment type="disruption phenotype">
    <text evidence="7">Abnormal activation of TORC1 signaling (PubMed:32801125). Abnormal punctate localization of TOR1 (PubMed:32801125). Sensitive to high hydrostatic pressure (mechanical stress) (PubMed:32801125).</text>
</comment>
<comment type="miscellaneous">
    <text evidence="3">Present with 3490 molecules/cell in log phase SD medium.</text>
</comment>
<organism>
    <name type="scientific">Saccharomyces cerevisiae (strain ATCC 204508 / S288c)</name>
    <name type="common">Baker's yeast</name>
    <dbReference type="NCBI Taxonomy" id="559292"/>
    <lineage>
        <taxon>Eukaryota</taxon>
        <taxon>Fungi</taxon>
        <taxon>Dikarya</taxon>
        <taxon>Ascomycota</taxon>
        <taxon>Saccharomycotina</taxon>
        <taxon>Saccharomycetes</taxon>
        <taxon>Saccharomycetales</taxon>
        <taxon>Saccharomycetaceae</taxon>
        <taxon>Saccharomyces</taxon>
    </lineage>
</organism>
<evidence type="ECO:0000255" key="1"/>
<evidence type="ECO:0000269" key="2">
    <source>
    </source>
</evidence>
<evidence type="ECO:0000269" key="3">
    <source>
    </source>
</evidence>
<evidence type="ECO:0000269" key="4">
    <source>
    </source>
</evidence>
<evidence type="ECO:0000269" key="5">
    <source>
    </source>
</evidence>
<evidence type="ECO:0000269" key="6">
    <source>
    </source>
</evidence>
<evidence type="ECO:0000269" key="7">
    <source>
    </source>
</evidence>
<evidence type="ECO:0007829" key="8">
    <source>
        <dbReference type="PDB" id="4FTX"/>
    </source>
</evidence>
<feature type="chain" id="PRO_0000202479" description="Protein SLM4">
    <location>
        <begin position="1"/>
        <end position="162"/>
    </location>
</feature>
<feature type="transmembrane region" description="Helical" evidence="1">
    <location>
        <begin position="127"/>
        <end position="144"/>
    </location>
</feature>
<feature type="helix" evidence="8">
    <location>
        <begin position="9"/>
        <end position="17"/>
    </location>
</feature>
<feature type="helix" evidence="8">
    <location>
        <begin position="22"/>
        <end position="24"/>
    </location>
</feature>
<feature type="strand" evidence="8">
    <location>
        <begin position="33"/>
        <end position="39"/>
    </location>
</feature>
<feature type="turn" evidence="8">
    <location>
        <begin position="40"/>
        <end position="42"/>
    </location>
</feature>
<feature type="strand" evidence="8">
    <location>
        <begin position="45"/>
        <end position="50"/>
    </location>
</feature>
<feature type="strand" evidence="8">
    <location>
        <begin position="53"/>
        <end position="55"/>
    </location>
</feature>
<feature type="helix" evidence="8">
    <location>
        <begin position="59"/>
        <end position="84"/>
    </location>
</feature>
<feature type="strand" evidence="8">
    <location>
        <begin position="92"/>
        <end position="100"/>
    </location>
</feature>
<feature type="strand" evidence="8">
    <location>
        <begin position="103"/>
        <end position="112"/>
    </location>
</feature>
<feature type="strand" evidence="8">
    <location>
        <begin position="115"/>
        <end position="121"/>
    </location>
</feature>
<feature type="strand" evidence="8">
    <location>
        <begin position="125"/>
        <end position="134"/>
    </location>
</feature>
<feature type="helix" evidence="8">
    <location>
        <begin position="139"/>
        <end position="150"/>
    </location>
</feature>
<feature type="helix" evidence="8">
    <location>
        <begin position="151"/>
        <end position="156"/>
    </location>
</feature>